<sequence length="476" mass="51687">MTWETVIGLEIHVQLNTKSKIFSGASTAFGAEPNAHASVVECALPGVLPVMNREVVEKAIKLGLALDAKINQKNVFDRKNYFYPDLPKGYQISQLDLPIVEHGKLEIVVGDDVKTINVTRAHMEEDAGKSVHEGLNSATGIDLNRAGTPLLEVVSEPEMHSAAEAVAYAKALHSLVTWLDICDGNMAEGSFRVDANVSVRPKGQAEFGTRREIKNLNSFRFLEQAINYEVEAQIEILEDGGKVQQATMLFDPEKGETRVMRLKEDAQDYRYFPDPDLLPVIISDAQMQKAKAEMPELPKEMAARFVADYGVSDYDARLLTASRAQAAYFEEAAKESGQGKPTANWMNGELAAALNKAGLELADSPITAPRLAALVGKIADGTLSSKLAKKAFEAMWAEPEATIAEIIEKHGLQQMTDTGAVEAIVDEVLANNAKAVEQFKSGNEKALNAIVGQVMKASKGKANPAQVQELIKAKLA</sequence>
<reference key="1">
    <citation type="journal article" date="2008" name="Genomics">
        <title>Characterization of ST-4821 complex, a unique Neisseria meningitidis clone.</title>
        <authorList>
            <person name="Peng J."/>
            <person name="Yang L."/>
            <person name="Yang F."/>
            <person name="Yang J."/>
            <person name="Yan Y."/>
            <person name="Nie H."/>
            <person name="Zhang X."/>
            <person name="Xiong Z."/>
            <person name="Jiang Y."/>
            <person name="Cheng F."/>
            <person name="Xu X."/>
            <person name="Chen S."/>
            <person name="Sun L."/>
            <person name="Li W."/>
            <person name="Shen Y."/>
            <person name="Shao Z."/>
            <person name="Liang X."/>
            <person name="Xu J."/>
            <person name="Jin Q."/>
        </authorList>
    </citation>
    <scope>NUCLEOTIDE SEQUENCE [LARGE SCALE GENOMIC DNA]</scope>
    <source>
        <strain>053442</strain>
    </source>
</reference>
<proteinExistence type="inferred from homology"/>
<name>GATB_NEIM0</name>
<keyword id="KW-0067">ATP-binding</keyword>
<keyword id="KW-0436">Ligase</keyword>
<keyword id="KW-0547">Nucleotide-binding</keyword>
<keyword id="KW-0648">Protein biosynthesis</keyword>
<dbReference type="EC" id="6.3.5.-" evidence="1"/>
<dbReference type="EMBL" id="CP000381">
    <property type="protein sequence ID" value="ABX73441.1"/>
    <property type="molecule type" value="Genomic_DNA"/>
</dbReference>
<dbReference type="RefSeq" id="WP_012221761.1">
    <property type="nucleotide sequence ID" value="NC_010120.1"/>
</dbReference>
<dbReference type="SMR" id="A9M005"/>
<dbReference type="KEGG" id="nmn:NMCC_1269"/>
<dbReference type="HOGENOM" id="CLU_019240_0_0_4"/>
<dbReference type="Proteomes" id="UP000001177">
    <property type="component" value="Chromosome"/>
</dbReference>
<dbReference type="GO" id="GO:0050566">
    <property type="term" value="F:asparaginyl-tRNA synthase (glutamine-hydrolyzing) activity"/>
    <property type="evidence" value="ECO:0007669"/>
    <property type="project" value="RHEA"/>
</dbReference>
<dbReference type="GO" id="GO:0005524">
    <property type="term" value="F:ATP binding"/>
    <property type="evidence" value="ECO:0007669"/>
    <property type="project" value="UniProtKB-KW"/>
</dbReference>
<dbReference type="GO" id="GO:0050567">
    <property type="term" value="F:glutaminyl-tRNA synthase (glutamine-hydrolyzing) activity"/>
    <property type="evidence" value="ECO:0007669"/>
    <property type="project" value="UniProtKB-UniRule"/>
</dbReference>
<dbReference type="GO" id="GO:0070681">
    <property type="term" value="P:glutaminyl-tRNAGln biosynthesis via transamidation"/>
    <property type="evidence" value="ECO:0007669"/>
    <property type="project" value="TreeGrafter"/>
</dbReference>
<dbReference type="GO" id="GO:0006412">
    <property type="term" value="P:translation"/>
    <property type="evidence" value="ECO:0007669"/>
    <property type="project" value="UniProtKB-UniRule"/>
</dbReference>
<dbReference type="FunFam" id="1.10.10.410:FF:000001">
    <property type="entry name" value="Aspartyl/glutamyl-tRNA(Asn/Gln) amidotransferase subunit B"/>
    <property type="match status" value="1"/>
</dbReference>
<dbReference type="FunFam" id="1.10.150.380:FF:000001">
    <property type="entry name" value="Aspartyl/glutamyl-tRNA(Asn/Gln) amidotransferase subunit B"/>
    <property type="match status" value="1"/>
</dbReference>
<dbReference type="Gene3D" id="1.10.10.410">
    <property type="match status" value="1"/>
</dbReference>
<dbReference type="Gene3D" id="1.10.150.380">
    <property type="entry name" value="GatB domain, N-terminal subdomain"/>
    <property type="match status" value="1"/>
</dbReference>
<dbReference type="HAMAP" id="MF_00121">
    <property type="entry name" value="GatB"/>
    <property type="match status" value="1"/>
</dbReference>
<dbReference type="InterPro" id="IPR017959">
    <property type="entry name" value="Asn/Gln-tRNA_amidoTrfase_suB/E"/>
</dbReference>
<dbReference type="InterPro" id="IPR006075">
    <property type="entry name" value="Asn/Gln-tRNA_Trfase_suB/E_cat"/>
</dbReference>
<dbReference type="InterPro" id="IPR018027">
    <property type="entry name" value="Asn/Gln_amidotransferase"/>
</dbReference>
<dbReference type="InterPro" id="IPR003789">
    <property type="entry name" value="Asn/Gln_tRNA_amidoTrase-B-like"/>
</dbReference>
<dbReference type="InterPro" id="IPR004413">
    <property type="entry name" value="GatB"/>
</dbReference>
<dbReference type="InterPro" id="IPR042114">
    <property type="entry name" value="GatB_C_1"/>
</dbReference>
<dbReference type="InterPro" id="IPR023168">
    <property type="entry name" value="GatB_Yqey_C_2"/>
</dbReference>
<dbReference type="InterPro" id="IPR017958">
    <property type="entry name" value="Gln-tRNA_amidoTrfase_suB_CS"/>
</dbReference>
<dbReference type="InterPro" id="IPR014746">
    <property type="entry name" value="Gln_synth/guanido_kin_cat_dom"/>
</dbReference>
<dbReference type="NCBIfam" id="TIGR00133">
    <property type="entry name" value="gatB"/>
    <property type="match status" value="1"/>
</dbReference>
<dbReference type="NCBIfam" id="NF004012">
    <property type="entry name" value="PRK05477.1-2"/>
    <property type="match status" value="1"/>
</dbReference>
<dbReference type="NCBIfam" id="NF004014">
    <property type="entry name" value="PRK05477.1-4"/>
    <property type="match status" value="1"/>
</dbReference>
<dbReference type="NCBIfam" id="NF004015">
    <property type="entry name" value="PRK05477.1-5"/>
    <property type="match status" value="1"/>
</dbReference>
<dbReference type="PANTHER" id="PTHR11659">
    <property type="entry name" value="GLUTAMYL-TRNA GLN AMIDOTRANSFERASE SUBUNIT B MITOCHONDRIAL AND PROKARYOTIC PET112-RELATED"/>
    <property type="match status" value="1"/>
</dbReference>
<dbReference type="PANTHER" id="PTHR11659:SF0">
    <property type="entry name" value="GLUTAMYL-TRNA(GLN) AMIDOTRANSFERASE SUBUNIT B, MITOCHONDRIAL"/>
    <property type="match status" value="1"/>
</dbReference>
<dbReference type="Pfam" id="PF02934">
    <property type="entry name" value="GatB_N"/>
    <property type="match status" value="1"/>
</dbReference>
<dbReference type="Pfam" id="PF02637">
    <property type="entry name" value="GatB_Yqey"/>
    <property type="match status" value="1"/>
</dbReference>
<dbReference type="SMART" id="SM00845">
    <property type="entry name" value="GatB_Yqey"/>
    <property type="match status" value="1"/>
</dbReference>
<dbReference type="SUPFAM" id="SSF89095">
    <property type="entry name" value="GatB/YqeY motif"/>
    <property type="match status" value="1"/>
</dbReference>
<dbReference type="SUPFAM" id="SSF55931">
    <property type="entry name" value="Glutamine synthetase/guanido kinase"/>
    <property type="match status" value="1"/>
</dbReference>
<dbReference type="PROSITE" id="PS01234">
    <property type="entry name" value="GATB"/>
    <property type="match status" value="1"/>
</dbReference>
<accession>A9M005</accession>
<evidence type="ECO:0000255" key="1">
    <source>
        <dbReference type="HAMAP-Rule" id="MF_00121"/>
    </source>
</evidence>
<gene>
    <name evidence="1" type="primary">gatB</name>
    <name type="ordered locus">NMCC_1269</name>
</gene>
<feature type="chain" id="PRO_1000076164" description="Aspartyl/glutamyl-tRNA(Asn/Gln) amidotransferase subunit B">
    <location>
        <begin position="1"/>
        <end position="476"/>
    </location>
</feature>
<protein>
    <recommendedName>
        <fullName evidence="1">Aspartyl/glutamyl-tRNA(Asn/Gln) amidotransferase subunit B</fullName>
        <shortName evidence="1">Asp/Glu-ADT subunit B</shortName>
        <ecNumber evidence="1">6.3.5.-</ecNumber>
    </recommendedName>
</protein>
<comment type="function">
    <text evidence="1">Allows the formation of correctly charged Asn-tRNA(Asn) or Gln-tRNA(Gln) through the transamidation of misacylated Asp-tRNA(Asn) or Glu-tRNA(Gln) in organisms which lack either or both of asparaginyl-tRNA or glutaminyl-tRNA synthetases. The reaction takes place in the presence of glutamine and ATP through an activated phospho-Asp-tRNA(Asn) or phospho-Glu-tRNA(Gln).</text>
</comment>
<comment type="catalytic activity">
    <reaction evidence="1">
        <text>L-glutamyl-tRNA(Gln) + L-glutamine + ATP + H2O = L-glutaminyl-tRNA(Gln) + L-glutamate + ADP + phosphate + H(+)</text>
        <dbReference type="Rhea" id="RHEA:17521"/>
        <dbReference type="Rhea" id="RHEA-COMP:9681"/>
        <dbReference type="Rhea" id="RHEA-COMP:9684"/>
        <dbReference type="ChEBI" id="CHEBI:15377"/>
        <dbReference type="ChEBI" id="CHEBI:15378"/>
        <dbReference type="ChEBI" id="CHEBI:29985"/>
        <dbReference type="ChEBI" id="CHEBI:30616"/>
        <dbReference type="ChEBI" id="CHEBI:43474"/>
        <dbReference type="ChEBI" id="CHEBI:58359"/>
        <dbReference type="ChEBI" id="CHEBI:78520"/>
        <dbReference type="ChEBI" id="CHEBI:78521"/>
        <dbReference type="ChEBI" id="CHEBI:456216"/>
    </reaction>
</comment>
<comment type="catalytic activity">
    <reaction evidence="1">
        <text>L-aspartyl-tRNA(Asn) + L-glutamine + ATP + H2O = L-asparaginyl-tRNA(Asn) + L-glutamate + ADP + phosphate + 2 H(+)</text>
        <dbReference type="Rhea" id="RHEA:14513"/>
        <dbReference type="Rhea" id="RHEA-COMP:9674"/>
        <dbReference type="Rhea" id="RHEA-COMP:9677"/>
        <dbReference type="ChEBI" id="CHEBI:15377"/>
        <dbReference type="ChEBI" id="CHEBI:15378"/>
        <dbReference type="ChEBI" id="CHEBI:29985"/>
        <dbReference type="ChEBI" id="CHEBI:30616"/>
        <dbReference type="ChEBI" id="CHEBI:43474"/>
        <dbReference type="ChEBI" id="CHEBI:58359"/>
        <dbReference type="ChEBI" id="CHEBI:78515"/>
        <dbReference type="ChEBI" id="CHEBI:78516"/>
        <dbReference type="ChEBI" id="CHEBI:456216"/>
    </reaction>
</comment>
<comment type="subunit">
    <text evidence="1">Heterotrimer of A, B and C subunits.</text>
</comment>
<comment type="similarity">
    <text evidence="1">Belongs to the GatB/GatE family. GatB subfamily.</text>
</comment>
<organism>
    <name type="scientific">Neisseria meningitidis serogroup C (strain 053442)</name>
    <dbReference type="NCBI Taxonomy" id="374833"/>
    <lineage>
        <taxon>Bacteria</taxon>
        <taxon>Pseudomonadati</taxon>
        <taxon>Pseudomonadota</taxon>
        <taxon>Betaproteobacteria</taxon>
        <taxon>Neisseriales</taxon>
        <taxon>Neisseriaceae</taxon>
        <taxon>Neisseria</taxon>
    </lineage>
</organism>